<evidence type="ECO:0000255" key="1">
    <source>
        <dbReference type="HAMAP-Rule" id="MF_00008"/>
    </source>
</evidence>
<accession>B7LF04</accession>
<reference key="1">
    <citation type="journal article" date="2009" name="PLoS Genet.">
        <title>Organised genome dynamics in the Escherichia coli species results in highly diverse adaptive paths.</title>
        <authorList>
            <person name="Touchon M."/>
            <person name="Hoede C."/>
            <person name="Tenaillon O."/>
            <person name="Barbe V."/>
            <person name="Baeriswyl S."/>
            <person name="Bidet P."/>
            <person name="Bingen E."/>
            <person name="Bonacorsi S."/>
            <person name="Bouchier C."/>
            <person name="Bouvet O."/>
            <person name="Calteau A."/>
            <person name="Chiapello H."/>
            <person name="Clermont O."/>
            <person name="Cruveiller S."/>
            <person name="Danchin A."/>
            <person name="Diard M."/>
            <person name="Dossat C."/>
            <person name="Karoui M.E."/>
            <person name="Frapy E."/>
            <person name="Garry L."/>
            <person name="Ghigo J.M."/>
            <person name="Gilles A.M."/>
            <person name="Johnson J."/>
            <person name="Le Bouguenec C."/>
            <person name="Lescat M."/>
            <person name="Mangenot S."/>
            <person name="Martinez-Jehanne V."/>
            <person name="Matic I."/>
            <person name="Nassif X."/>
            <person name="Oztas S."/>
            <person name="Petit M.A."/>
            <person name="Pichon C."/>
            <person name="Rouy Z."/>
            <person name="Ruf C.S."/>
            <person name="Schneider D."/>
            <person name="Tourret J."/>
            <person name="Vacherie B."/>
            <person name="Vallenet D."/>
            <person name="Medigue C."/>
            <person name="Rocha E.P.C."/>
            <person name="Denamur E."/>
        </authorList>
    </citation>
    <scope>NUCLEOTIDE SEQUENCE [LARGE SCALE GENOMIC DNA]</scope>
    <source>
        <strain>55989 / EAEC</strain>
    </source>
</reference>
<gene>
    <name evidence="1" type="primary">thyA</name>
    <name type="ordered locus">EC55989_3103</name>
</gene>
<sequence length="264" mass="30480">MKQYLELMQKVLDEGTQKNDRTGTGTLSIFGHQMRFNLQDGFPLVTTKRCHLRSIIHELLWFLQGDTNIAYLHENNVTIWDEWADENGDLGPVYGKQWRAWPTPDGRHIDQITTVLNQLKNDPDSRRIIVSAWNVGELDKMALAPCHAFFQFYVADGKLSCQLYQRSCDVFLGLPFNIASYALLVHMMAQQCDLEVGDFVWTGGDTHLYSNHMDQTHLQLSREPRPLPKLIIKRKPESIFDYRFEDFEIEGYDPHPGIKAPVAI</sequence>
<organism>
    <name type="scientific">Escherichia coli (strain 55989 / EAEC)</name>
    <dbReference type="NCBI Taxonomy" id="585055"/>
    <lineage>
        <taxon>Bacteria</taxon>
        <taxon>Pseudomonadati</taxon>
        <taxon>Pseudomonadota</taxon>
        <taxon>Gammaproteobacteria</taxon>
        <taxon>Enterobacterales</taxon>
        <taxon>Enterobacteriaceae</taxon>
        <taxon>Escherichia</taxon>
    </lineage>
</organism>
<dbReference type="EC" id="2.1.1.45" evidence="1"/>
<dbReference type="EMBL" id="CU928145">
    <property type="protein sequence ID" value="CAU99013.1"/>
    <property type="molecule type" value="Genomic_DNA"/>
</dbReference>
<dbReference type="RefSeq" id="WP_000816232.1">
    <property type="nucleotide sequence ID" value="NZ_CP028304.1"/>
</dbReference>
<dbReference type="BMRB" id="B7LF04"/>
<dbReference type="SMR" id="B7LF04"/>
<dbReference type="GeneID" id="93779171"/>
<dbReference type="KEGG" id="eck:EC55989_3103"/>
<dbReference type="HOGENOM" id="CLU_021669_0_0_6"/>
<dbReference type="UniPathway" id="UPA00575"/>
<dbReference type="Proteomes" id="UP000000746">
    <property type="component" value="Chromosome"/>
</dbReference>
<dbReference type="GO" id="GO:0005829">
    <property type="term" value="C:cytosol"/>
    <property type="evidence" value="ECO:0007669"/>
    <property type="project" value="TreeGrafter"/>
</dbReference>
<dbReference type="GO" id="GO:0004799">
    <property type="term" value="F:thymidylate synthase activity"/>
    <property type="evidence" value="ECO:0007669"/>
    <property type="project" value="UniProtKB-UniRule"/>
</dbReference>
<dbReference type="GO" id="GO:0006231">
    <property type="term" value="P:dTMP biosynthetic process"/>
    <property type="evidence" value="ECO:0007669"/>
    <property type="project" value="UniProtKB-UniRule"/>
</dbReference>
<dbReference type="GO" id="GO:0006235">
    <property type="term" value="P:dTTP biosynthetic process"/>
    <property type="evidence" value="ECO:0007669"/>
    <property type="project" value="UniProtKB-UniRule"/>
</dbReference>
<dbReference type="GO" id="GO:0032259">
    <property type="term" value="P:methylation"/>
    <property type="evidence" value="ECO:0007669"/>
    <property type="project" value="UniProtKB-KW"/>
</dbReference>
<dbReference type="CDD" id="cd00351">
    <property type="entry name" value="TS_Pyrimidine_HMase"/>
    <property type="match status" value="1"/>
</dbReference>
<dbReference type="FunFam" id="3.30.572.10:FF:000001">
    <property type="entry name" value="Thymidylate synthase"/>
    <property type="match status" value="1"/>
</dbReference>
<dbReference type="Gene3D" id="3.30.572.10">
    <property type="entry name" value="Thymidylate synthase/dCMP hydroxymethylase domain"/>
    <property type="match status" value="1"/>
</dbReference>
<dbReference type="HAMAP" id="MF_00008">
    <property type="entry name" value="Thymidy_synth_bact"/>
    <property type="match status" value="1"/>
</dbReference>
<dbReference type="InterPro" id="IPR045097">
    <property type="entry name" value="Thymidate_synth/dCMP_Mease"/>
</dbReference>
<dbReference type="InterPro" id="IPR023451">
    <property type="entry name" value="Thymidate_synth/dCMP_Mease_dom"/>
</dbReference>
<dbReference type="InterPro" id="IPR036926">
    <property type="entry name" value="Thymidate_synth/dCMP_Mease_sf"/>
</dbReference>
<dbReference type="InterPro" id="IPR000398">
    <property type="entry name" value="Thymidylate_synthase"/>
</dbReference>
<dbReference type="InterPro" id="IPR020940">
    <property type="entry name" value="Thymidylate_synthase_AS"/>
</dbReference>
<dbReference type="NCBIfam" id="NF002497">
    <property type="entry name" value="PRK01827.1-3"/>
    <property type="match status" value="1"/>
</dbReference>
<dbReference type="NCBIfam" id="NF002499">
    <property type="entry name" value="PRK01827.1-5"/>
    <property type="match status" value="1"/>
</dbReference>
<dbReference type="NCBIfam" id="TIGR03284">
    <property type="entry name" value="thym_sym"/>
    <property type="match status" value="2"/>
</dbReference>
<dbReference type="PANTHER" id="PTHR11548:SF9">
    <property type="entry name" value="THYMIDYLATE SYNTHASE"/>
    <property type="match status" value="1"/>
</dbReference>
<dbReference type="PANTHER" id="PTHR11548">
    <property type="entry name" value="THYMIDYLATE SYNTHASE 1"/>
    <property type="match status" value="1"/>
</dbReference>
<dbReference type="Pfam" id="PF00303">
    <property type="entry name" value="Thymidylat_synt"/>
    <property type="match status" value="1"/>
</dbReference>
<dbReference type="PRINTS" id="PR00108">
    <property type="entry name" value="THYMDSNTHASE"/>
</dbReference>
<dbReference type="SUPFAM" id="SSF55831">
    <property type="entry name" value="Thymidylate synthase/dCMP hydroxymethylase"/>
    <property type="match status" value="1"/>
</dbReference>
<dbReference type="PROSITE" id="PS00091">
    <property type="entry name" value="THYMIDYLATE_SYNTHASE"/>
    <property type="match status" value="1"/>
</dbReference>
<comment type="function">
    <text evidence="1">Catalyzes the reductive methylation of 2'-deoxyuridine-5'-monophosphate (dUMP) to 2'-deoxythymidine-5'-monophosphate (dTMP) while utilizing 5,10-methylenetetrahydrofolate (mTHF) as the methyl donor and reductant in the reaction, yielding dihydrofolate (DHF) as a by-product. This enzymatic reaction provides an intracellular de novo source of dTMP, an essential precursor for DNA biosynthesis.</text>
</comment>
<comment type="catalytic activity">
    <reaction evidence="1">
        <text>dUMP + (6R)-5,10-methylene-5,6,7,8-tetrahydrofolate = 7,8-dihydrofolate + dTMP</text>
        <dbReference type="Rhea" id="RHEA:12104"/>
        <dbReference type="ChEBI" id="CHEBI:15636"/>
        <dbReference type="ChEBI" id="CHEBI:57451"/>
        <dbReference type="ChEBI" id="CHEBI:63528"/>
        <dbReference type="ChEBI" id="CHEBI:246422"/>
        <dbReference type="EC" id="2.1.1.45"/>
    </reaction>
</comment>
<comment type="pathway">
    <text evidence="1">Pyrimidine metabolism; dTTP biosynthesis.</text>
</comment>
<comment type="subunit">
    <text evidence="1">Homodimer.</text>
</comment>
<comment type="subcellular location">
    <subcellularLocation>
        <location evidence="1">Cytoplasm</location>
    </subcellularLocation>
</comment>
<comment type="similarity">
    <text evidence="1">Belongs to the thymidylate synthase family. Bacterial-type ThyA subfamily.</text>
</comment>
<proteinExistence type="inferred from homology"/>
<feature type="chain" id="PRO_1000197240" description="Thymidylate synthase">
    <location>
        <begin position="1"/>
        <end position="264"/>
    </location>
</feature>
<feature type="active site" description="Nucleophile" evidence="1">
    <location>
        <position position="146"/>
    </location>
</feature>
<feature type="binding site" description="in other chain" evidence="1">
    <location>
        <position position="21"/>
    </location>
    <ligand>
        <name>dUMP</name>
        <dbReference type="ChEBI" id="CHEBI:246422"/>
        <note>ligand shared between dimeric partners</note>
    </ligand>
</feature>
<feature type="binding site" evidence="1">
    <location>
        <position position="51"/>
    </location>
    <ligand>
        <name>(6R)-5,10-methylene-5,6,7,8-tetrahydrofolate</name>
        <dbReference type="ChEBI" id="CHEBI:15636"/>
    </ligand>
</feature>
<feature type="binding site" evidence="1">
    <location>
        <begin position="126"/>
        <end position="127"/>
    </location>
    <ligand>
        <name>dUMP</name>
        <dbReference type="ChEBI" id="CHEBI:246422"/>
        <note>ligand shared between dimeric partners</note>
    </ligand>
</feature>
<feature type="binding site" description="in other chain" evidence="1">
    <location>
        <begin position="166"/>
        <end position="169"/>
    </location>
    <ligand>
        <name>dUMP</name>
        <dbReference type="ChEBI" id="CHEBI:246422"/>
        <note>ligand shared between dimeric partners</note>
    </ligand>
</feature>
<feature type="binding site" evidence="1">
    <location>
        <position position="169"/>
    </location>
    <ligand>
        <name>(6R)-5,10-methylene-5,6,7,8-tetrahydrofolate</name>
        <dbReference type="ChEBI" id="CHEBI:15636"/>
    </ligand>
</feature>
<feature type="binding site" description="in other chain" evidence="1">
    <location>
        <position position="177"/>
    </location>
    <ligand>
        <name>dUMP</name>
        <dbReference type="ChEBI" id="CHEBI:246422"/>
        <note>ligand shared between dimeric partners</note>
    </ligand>
</feature>
<feature type="binding site" description="in other chain" evidence="1">
    <location>
        <begin position="207"/>
        <end position="209"/>
    </location>
    <ligand>
        <name>dUMP</name>
        <dbReference type="ChEBI" id="CHEBI:246422"/>
        <note>ligand shared between dimeric partners</note>
    </ligand>
</feature>
<feature type="binding site" evidence="1">
    <location>
        <position position="263"/>
    </location>
    <ligand>
        <name>(6R)-5,10-methylene-5,6,7,8-tetrahydrofolate</name>
        <dbReference type="ChEBI" id="CHEBI:15636"/>
    </ligand>
</feature>
<keyword id="KW-0963">Cytoplasm</keyword>
<keyword id="KW-0489">Methyltransferase</keyword>
<keyword id="KW-0545">Nucleotide biosynthesis</keyword>
<keyword id="KW-1185">Reference proteome</keyword>
<keyword id="KW-0808">Transferase</keyword>
<name>TYSY_ECO55</name>
<protein>
    <recommendedName>
        <fullName evidence="1">Thymidylate synthase</fullName>
        <shortName evidence="1">TS</shortName>
        <shortName evidence="1">TSase</shortName>
        <ecNumber evidence="1">2.1.1.45</ecNumber>
    </recommendedName>
</protein>